<organism>
    <name type="scientific">Burkholderia mallei (strain SAVP1)</name>
    <dbReference type="NCBI Taxonomy" id="320388"/>
    <lineage>
        <taxon>Bacteria</taxon>
        <taxon>Pseudomonadati</taxon>
        <taxon>Pseudomonadota</taxon>
        <taxon>Betaproteobacteria</taxon>
        <taxon>Burkholderiales</taxon>
        <taxon>Burkholderiaceae</taxon>
        <taxon>Burkholderia</taxon>
        <taxon>pseudomallei group</taxon>
    </lineage>
</organism>
<reference key="1">
    <citation type="journal article" date="2010" name="Genome Biol. Evol.">
        <title>Continuing evolution of Burkholderia mallei through genome reduction and large-scale rearrangements.</title>
        <authorList>
            <person name="Losada L."/>
            <person name="Ronning C.M."/>
            <person name="DeShazer D."/>
            <person name="Woods D."/>
            <person name="Fedorova N."/>
            <person name="Kim H.S."/>
            <person name="Shabalina S.A."/>
            <person name="Pearson T.R."/>
            <person name="Brinkac L."/>
            <person name="Tan P."/>
            <person name="Nandi T."/>
            <person name="Crabtree J."/>
            <person name="Badger J."/>
            <person name="Beckstrom-Sternberg S."/>
            <person name="Saqib M."/>
            <person name="Schutzer S.E."/>
            <person name="Keim P."/>
            <person name="Nierman W.C."/>
        </authorList>
    </citation>
    <scope>NUCLEOTIDE SEQUENCE [LARGE SCALE GENOMIC DNA]</scope>
    <source>
        <strain>SAVP1</strain>
    </source>
</reference>
<gene>
    <name evidence="1" type="primary">gatA</name>
    <name type="ordered locus">BMASAVP1_A2783</name>
</gene>
<sequence>MHAKSLTELRAALDAKECSAVELAQHYLKRIDAARDLNAFVHVDAELTLAQAKAADAALANGEAGPLAGLPIVHKDVFVTRGWRSTAGSKMLANYASPFDATVVARLSAAGMVTLGKTNMDEFAMGSSNENSAFGPVKNPWDTSAVPGGSSGGSSAAVAARLAPAATGTDTGGSIRQPASFAGVTGIKPTYGRVSRYGMIAFASSLDQGGPMARSAADCALLLNAMAGFDERDSTSLERADEDYTRHLGKAWAAGGDAGKPLAGLRIGLPAEYFGAGLADDVRAAIDAALKTYEALGATLVPVSLPKTELSIPVYYVIAPAEASSNLSRFDGVRYGHRAAEYRDLLDMYKKSRAEGFGPEVKRRILVGTYVLSHGYYDAYYLQAQKIRRIIAQDFQEAFKSCDVIMGPASPTVAWDIGAKGDDPVQMYLADIYTLSVSLAGLPGMSVPCGFGAGANAKRPVGLQIIGNYFDEARMLQVADAFQRATDWHVQEPAGV</sequence>
<feature type="chain" id="PRO_1000015810" description="Glutamyl-tRNA(Gln) amidotransferase subunit A">
    <location>
        <begin position="1"/>
        <end position="496"/>
    </location>
</feature>
<feature type="active site" description="Charge relay system" evidence="1">
    <location>
        <position position="75"/>
    </location>
</feature>
<feature type="active site" description="Charge relay system" evidence="1">
    <location>
        <position position="150"/>
    </location>
</feature>
<feature type="active site" description="Acyl-ester intermediate" evidence="1">
    <location>
        <position position="174"/>
    </location>
</feature>
<proteinExistence type="inferred from homology"/>
<accession>A1V776</accession>
<dbReference type="EC" id="6.3.5.7" evidence="1"/>
<dbReference type="EMBL" id="CP000526">
    <property type="protein sequence ID" value="ABM50560.1"/>
    <property type="molecule type" value="Genomic_DNA"/>
</dbReference>
<dbReference type="RefSeq" id="WP_004189326.1">
    <property type="nucleotide sequence ID" value="NC_008785.1"/>
</dbReference>
<dbReference type="SMR" id="A1V776"/>
<dbReference type="GeneID" id="92977942"/>
<dbReference type="KEGG" id="bmv:BMASAVP1_A2783"/>
<dbReference type="HOGENOM" id="CLU_009600_0_3_4"/>
<dbReference type="GO" id="GO:0030956">
    <property type="term" value="C:glutamyl-tRNA(Gln) amidotransferase complex"/>
    <property type="evidence" value="ECO:0007669"/>
    <property type="project" value="InterPro"/>
</dbReference>
<dbReference type="GO" id="GO:0005524">
    <property type="term" value="F:ATP binding"/>
    <property type="evidence" value="ECO:0007669"/>
    <property type="project" value="UniProtKB-KW"/>
</dbReference>
<dbReference type="GO" id="GO:0050567">
    <property type="term" value="F:glutaminyl-tRNA synthase (glutamine-hydrolyzing) activity"/>
    <property type="evidence" value="ECO:0007669"/>
    <property type="project" value="UniProtKB-UniRule"/>
</dbReference>
<dbReference type="GO" id="GO:0006412">
    <property type="term" value="P:translation"/>
    <property type="evidence" value="ECO:0007669"/>
    <property type="project" value="UniProtKB-UniRule"/>
</dbReference>
<dbReference type="Gene3D" id="3.90.1300.10">
    <property type="entry name" value="Amidase signature (AS) domain"/>
    <property type="match status" value="1"/>
</dbReference>
<dbReference type="HAMAP" id="MF_00120">
    <property type="entry name" value="GatA"/>
    <property type="match status" value="1"/>
</dbReference>
<dbReference type="InterPro" id="IPR000120">
    <property type="entry name" value="Amidase"/>
</dbReference>
<dbReference type="InterPro" id="IPR020556">
    <property type="entry name" value="Amidase_CS"/>
</dbReference>
<dbReference type="InterPro" id="IPR023631">
    <property type="entry name" value="Amidase_dom"/>
</dbReference>
<dbReference type="InterPro" id="IPR036928">
    <property type="entry name" value="AS_sf"/>
</dbReference>
<dbReference type="InterPro" id="IPR004412">
    <property type="entry name" value="GatA"/>
</dbReference>
<dbReference type="NCBIfam" id="TIGR00132">
    <property type="entry name" value="gatA"/>
    <property type="match status" value="1"/>
</dbReference>
<dbReference type="PANTHER" id="PTHR11895:SF151">
    <property type="entry name" value="GLUTAMYL-TRNA(GLN) AMIDOTRANSFERASE SUBUNIT A"/>
    <property type="match status" value="1"/>
</dbReference>
<dbReference type="PANTHER" id="PTHR11895">
    <property type="entry name" value="TRANSAMIDASE"/>
    <property type="match status" value="1"/>
</dbReference>
<dbReference type="Pfam" id="PF01425">
    <property type="entry name" value="Amidase"/>
    <property type="match status" value="1"/>
</dbReference>
<dbReference type="SUPFAM" id="SSF75304">
    <property type="entry name" value="Amidase signature (AS) enzymes"/>
    <property type="match status" value="1"/>
</dbReference>
<dbReference type="PROSITE" id="PS00571">
    <property type="entry name" value="AMIDASES"/>
    <property type="match status" value="1"/>
</dbReference>
<comment type="function">
    <text evidence="1">Allows the formation of correctly charged Gln-tRNA(Gln) through the transamidation of misacylated Glu-tRNA(Gln) in organisms which lack glutaminyl-tRNA synthetase. The reaction takes place in the presence of glutamine and ATP through an activated gamma-phospho-Glu-tRNA(Gln).</text>
</comment>
<comment type="catalytic activity">
    <reaction evidence="1">
        <text>L-glutamyl-tRNA(Gln) + L-glutamine + ATP + H2O = L-glutaminyl-tRNA(Gln) + L-glutamate + ADP + phosphate + H(+)</text>
        <dbReference type="Rhea" id="RHEA:17521"/>
        <dbReference type="Rhea" id="RHEA-COMP:9681"/>
        <dbReference type="Rhea" id="RHEA-COMP:9684"/>
        <dbReference type="ChEBI" id="CHEBI:15377"/>
        <dbReference type="ChEBI" id="CHEBI:15378"/>
        <dbReference type="ChEBI" id="CHEBI:29985"/>
        <dbReference type="ChEBI" id="CHEBI:30616"/>
        <dbReference type="ChEBI" id="CHEBI:43474"/>
        <dbReference type="ChEBI" id="CHEBI:58359"/>
        <dbReference type="ChEBI" id="CHEBI:78520"/>
        <dbReference type="ChEBI" id="CHEBI:78521"/>
        <dbReference type="ChEBI" id="CHEBI:456216"/>
        <dbReference type="EC" id="6.3.5.7"/>
    </reaction>
</comment>
<comment type="subunit">
    <text evidence="1">Heterotrimer of A, B and C subunits.</text>
</comment>
<comment type="similarity">
    <text evidence="1">Belongs to the amidase family. GatA subfamily.</text>
</comment>
<name>GATA_BURMS</name>
<evidence type="ECO:0000255" key="1">
    <source>
        <dbReference type="HAMAP-Rule" id="MF_00120"/>
    </source>
</evidence>
<keyword id="KW-0067">ATP-binding</keyword>
<keyword id="KW-0436">Ligase</keyword>
<keyword id="KW-0547">Nucleotide-binding</keyword>
<keyword id="KW-0648">Protein biosynthesis</keyword>
<protein>
    <recommendedName>
        <fullName evidence="1">Glutamyl-tRNA(Gln) amidotransferase subunit A</fullName>
        <shortName evidence="1">Glu-ADT subunit A</shortName>
        <ecNumber evidence="1">6.3.5.7</ecNumber>
    </recommendedName>
</protein>